<sequence>MDDTLNQLNPSMSRRQLLNFFTGAIVAATASAAIYPATKFFMPPAESTDAEGGVLAKDKIGHPIPASQILVQASGTRALIAGLAGEPTYLTVREDGTLDPMGIVNNCTHLGCTFPWNPVDQQFQCPCHGSRYDAQGSVERGPANRPLKLVHVQVKDDYIWISSWQETDPRTGEKPWWV</sequence>
<comment type="function">
    <text evidence="1">Component of the cytochrome b6-f complex, which mediates electron transfer between photosystem II (PSII) and photosystem I (PSI), cyclic electron flow around PSI, and state transitions.</text>
</comment>
<comment type="catalytic activity">
    <reaction evidence="1">
        <text>2 oxidized [plastocyanin] + a plastoquinol + 2 H(+)(in) = 2 reduced [plastocyanin] + a plastoquinone + 4 H(+)(out)</text>
        <dbReference type="Rhea" id="RHEA:22148"/>
        <dbReference type="Rhea" id="RHEA-COMP:9561"/>
        <dbReference type="Rhea" id="RHEA-COMP:9562"/>
        <dbReference type="Rhea" id="RHEA-COMP:10039"/>
        <dbReference type="Rhea" id="RHEA-COMP:10040"/>
        <dbReference type="ChEBI" id="CHEBI:15378"/>
        <dbReference type="ChEBI" id="CHEBI:17757"/>
        <dbReference type="ChEBI" id="CHEBI:29036"/>
        <dbReference type="ChEBI" id="CHEBI:49552"/>
        <dbReference type="ChEBI" id="CHEBI:62192"/>
        <dbReference type="EC" id="7.1.1.6"/>
    </reaction>
</comment>
<comment type="cofactor">
    <cofactor evidence="1">
        <name>[2Fe-2S] cluster</name>
        <dbReference type="ChEBI" id="CHEBI:190135"/>
    </cofactor>
    <text evidence="1">Binds 1 [2Fe-2S] cluster per subunit.</text>
</comment>
<comment type="subunit">
    <text evidence="1">The 4 large subunits of the cytochrome b6-f complex are cytochrome b6, subunit IV (17 kDa polypeptide, PetD), cytochrome f and the Rieske protein, while the 4 small subunits are PetG, PetL, PetM and PetN. The complex functions as a dimer.</text>
</comment>
<comment type="subcellular location">
    <subcellularLocation>
        <location evidence="1">Cellular thylakoid membrane</location>
        <topology evidence="1">Single-pass membrane protein</topology>
    </subcellularLocation>
    <text evidence="1">The transmembrane helix obliquely spans the membrane in one monomer, and its extrinsic C-terminal domain is part of the other monomer.</text>
</comment>
<comment type="miscellaneous">
    <text>The Rieske iron-sulfur protein is a high potential 2Fe-2S protein.</text>
</comment>
<comment type="similarity">
    <text evidence="1">Belongs to the Rieske iron-sulfur protein family.</text>
</comment>
<accession>Q93SW6</accession>
<accession>Q3M7Q2</accession>
<evidence type="ECO:0000255" key="1">
    <source>
        <dbReference type="HAMAP-Rule" id="MF_01335"/>
    </source>
</evidence>
<reference key="1">
    <citation type="submission" date="2001-05" db="EMBL/GenBank/DDBJ databases">
        <title>b6f complex of Anabaena variabilis, possible function of alternative Rieske-FeS proteins.</title>
        <authorList>
            <person name="Arnold M."/>
        </authorList>
    </citation>
    <scope>NUCLEOTIDE SEQUENCE [GENOMIC DNA]</scope>
</reference>
<reference key="2">
    <citation type="journal article" date="2014" name="Stand. Genomic Sci.">
        <title>Complete genome sequence of Anabaena variabilis ATCC 29413.</title>
        <authorList>
            <person name="Thiel T."/>
            <person name="Pratte B.S."/>
            <person name="Zhong J."/>
            <person name="Goodwin L."/>
            <person name="Copeland A."/>
            <person name="Lucas S."/>
            <person name="Han C."/>
            <person name="Pitluck S."/>
            <person name="Land M.L."/>
            <person name="Kyrpides N.C."/>
            <person name="Woyke T."/>
        </authorList>
    </citation>
    <scope>NUCLEOTIDE SEQUENCE [LARGE SCALE GENOMIC DNA]</scope>
    <source>
        <strain>ATCC 29413 / PCC 7937</strain>
    </source>
</reference>
<keyword id="KW-0001">2Fe-2S</keyword>
<keyword id="KW-1015">Disulfide bond</keyword>
<keyword id="KW-0249">Electron transport</keyword>
<keyword id="KW-0408">Iron</keyword>
<keyword id="KW-0411">Iron-sulfur</keyword>
<keyword id="KW-0472">Membrane</keyword>
<keyword id="KW-0479">Metal-binding</keyword>
<keyword id="KW-0793">Thylakoid</keyword>
<keyword id="KW-1278">Translocase</keyword>
<keyword id="KW-0812">Transmembrane</keyword>
<keyword id="KW-1133">Transmembrane helix</keyword>
<keyword id="KW-0813">Transport</keyword>
<dbReference type="EC" id="7.1.1.6" evidence="1"/>
<dbReference type="EMBL" id="AJ311360">
    <property type="protein sequence ID" value="CAC39244.1"/>
    <property type="molecule type" value="Genomic_DNA"/>
</dbReference>
<dbReference type="EMBL" id="CP000117">
    <property type="protein sequence ID" value="ABA22984.1"/>
    <property type="molecule type" value="Genomic_DNA"/>
</dbReference>
<dbReference type="SMR" id="Q93SW6"/>
<dbReference type="STRING" id="240292.Ava_3377"/>
<dbReference type="KEGG" id="ava:Ava_3377"/>
<dbReference type="eggNOG" id="COG0723">
    <property type="taxonomic scope" value="Bacteria"/>
</dbReference>
<dbReference type="HOGENOM" id="CLU_055690_8_0_3"/>
<dbReference type="Proteomes" id="UP000002533">
    <property type="component" value="Chromosome"/>
</dbReference>
<dbReference type="GO" id="GO:0031676">
    <property type="term" value="C:plasma membrane-derived thylakoid membrane"/>
    <property type="evidence" value="ECO:0007669"/>
    <property type="project" value="UniProtKB-SubCell"/>
</dbReference>
<dbReference type="GO" id="GO:0051537">
    <property type="term" value="F:2 iron, 2 sulfur cluster binding"/>
    <property type="evidence" value="ECO:0007669"/>
    <property type="project" value="UniProtKB-KW"/>
</dbReference>
<dbReference type="GO" id="GO:0045158">
    <property type="term" value="F:electron transporter, transferring electrons within cytochrome b6/f complex of photosystem II activity"/>
    <property type="evidence" value="ECO:0007669"/>
    <property type="project" value="UniProtKB-UniRule"/>
</dbReference>
<dbReference type="GO" id="GO:0046872">
    <property type="term" value="F:metal ion binding"/>
    <property type="evidence" value="ECO:0007669"/>
    <property type="project" value="UniProtKB-KW"/>
</dbReference>
<dbReference type="GO" id="GO:0004497">
    <property type="term" value="F:monooxygenase activity"/>
    <property type="evidence" value="ECO:0007669"/>
    <property type="project" value="UniProtKB-ARBA"/>
</dbReference>
<dbReference type="GO" id="GO:0016705">
    <property type="term" value="F:oxidoreductase activity, acting on paired donors, with incorporation or reduction of molecular oxygen"/>
    <property type="evidence" value="ECO:0007669"/>
    <property type="project" value="UniProtKB-ARBA"/>
</dbReference>
<dbReference type="GO" id="GO:0009496">
    <property type="term" value="F:plastoquinol--plastocyanin reductase activity"/>
    <property type="evidence" value="ECO:0007669"/>
    <property type="project" value="UniProtKB-UniRule"/>
</dbReference>
<dbReference type="GO" id="GO:0015979">
    <property type="term" value="P:photosynthesis"/>
    <property type="evidence" value="ECO:0007669"/>
    <property type="project" value="UniProtKB-UniRule"/>
</dbReference>
<dbReference type="CDD" id="cd03471">
    <property type="entry name" value="Rieske_cytochrome_b6f"/>
    <property type="match status" value="1"/>
</dbReference>
<dbReference type="Gene3D" id="2.102.10.10">
    <property type="entry name" value="Rieske [2Fe-2S] iron-sulphur domain"/>
    <property type="match status" value="1"/>
</dbReference>
<dbReference type="Gene3D" id="1.20.5.700">
    <property type="entry name" value="Single helix bin"/>
    <property type="match status" value="1"/>
</dbReference>
<dbReference type="HAMAP" id="MF_01335">
    <property type="entry name" value="Cytb6_f_Rieske"/>
    <property type="match status" value="1"/>
</dbReference>
<dbReference type="InterPro" id="IPR023960">
    <property type="entry name" value="Cyt_b6_f_Rieske"/>
</dbReference>
<dbReference type="InterPro" id="IPR017941">
    <property type="entry name" value="Rieske_2Fe-2S"/>
</dbReference>
<dbReference type="InterPro" id="IPR036922">
    <property type="entry name" value="Rieske_2Fe-2S_sf"/>
</dbReference>
<dbReference type="InterPro" id="IPR014349">
    <property type="entry name" value="Rieske_Fe-S_prot"/>
</dbReference>
<dbReference type="InterPro" id="IPR005805">
    <property type="entry name" value="Rieske_Fe-S_prot_C"/>
</dbReference>
<dbReference type="InterPro" id="IPR006311">
    <property type="entry name" value="TAT_signal"/>
</dbReference>
<dbReference type="NCBIfam" id="NF045928">
    <property type="entry name" value="Cytb6fFeSPetC"/>
    <property type="match status" value="1"/>
</dbReference>
<dbReference type="NCBIfam" id="NF010001">
    <property type="entry name" value="PRK13474.1"/>
    <property type="match status" value="1"/>
</dbReference>
<dbReference type="PANTHER" id="PTHR10134">
    <property type="entry name" value="CYTOCHROME B-C1 COMPLEX SUBUNIT RIESKE, MITOCHONDRIAL"/>
    <property type="match status" value="1"/>
</dbReference>
<dbReference type="Pfam" id="PF00355">
    <property type="entry name" value="Rieske"/>
    <property type="match status" value="1"/>
</dbReference>
<dbReference type="Pfam" id="PF25471">
    <property type="entry name" value="TM_PetC"/>
    <property type="match status" value="1"/>
</dbReference>
<dbReference type="PRINTS" id="PR00162">
    <property type="entry name" value="RIESKE"/>
</dbReference>
<dbReference type="SUPFAM" id="SSF50022">
    <property type="entry name" value="ISP domain"/>
    <property type="match status" value="1"/>
</dbReference>
<dbReference type="PROSITE" id="PS51296">
    <property type="entry name" value="RIESKE"/>
    <property type="match status" value="1"/>
</dbReference>
<dbReference type="PROSITE" id="PS51318">
    <property type="entry name" value="TAT"/>
    <property type="match status" value="1"/>
</dbReference>
<name>UCRIB_TRIV2</name>
<feature type="chain" id="PRO_0000127771" description="Cytochrome b6-f complex iron-sulfur subunit 2">
    <location>
        <begin position="1"/>
        <end position="178"/>
    </location>
</feature>
<feature type="transmembrane region" description="Helical" evidence="1">
    <location>
        <begin position="17"/>
        <end position="36"/>
    </location>
</feature>
<feature type="domain" description="Rieske" evidence="1">
    <location>
        <begin position="61"/>
        <end position="161"/>
    </location>
</feature>
<feature type="binding site" evidence="1">
    <location>
        <position position="107"/>
    </location>
    <ligand>
        <name>[2Fe-2S] cluster</name>
        <dbReference type="ChEBI" id="CHEBI:190135"/>
    </ligand>
</feature>
<feature type="binding site" evidence="1">
    <location>
        <position position="109"/>
    </location>
    <ligand>
        <name>[2Fe-2S] cluster</name>
        <dbReference type="ChEBI" id="CHEBI:190135"/>
    </ligand>
</feature>
<feature type="binding site" evidence="1">
    <location>
        <position position="125"/>
    </location>
    <ligand>
        <name>[2Fe-2S] cluster</name>
        <dbReference type="ChEBI" id="CHEBI:190135"/>
    </ligand>
</feature>
<feature type="binding site" evidence="1">
    <location>
        <position position="128"/>
    </location>
    <ligand>
        <name>[2Fe-2S] cluster</name>
        <dbReference type="ChEBI" id="CHEBI:190135"/>
    </ligand>
</feature>
<feature type="disulfide bond" evidence="1">
    <location>
        <begin position="112"/>
        <end position="127"/>
    </location>
</feature>
<organism>
    <name type="scientific">Trichormus variabilis (strain ATCC 29413 / PCC 7937)</name>
    <name type="common">Anabaena variabilis</name>
    <dbReference type="NCBI Taxonomy" id="240292"/>
    <lineage>
        <taxon>Bacteria</taxon>
        <taxon>Bacillati</taxon>
        <taxon>Cyanobacteriota</taxon>
        <taxon>Cyanophyceae</taxon>
        <taxon>Nostocales</taxon>
        <taxon>Nostocaceae</taxon>
        <taxon>Trichormus</taxon>
    </lineage>
</organism>
<protein>
    <recommendedName>
        <fullName evidence="1">Cytochrome b6-f complex iron-sulfur subunit 2</fullName>
        <ecNumber evidence="1">7.1.1.6</ecNumber>
    </recommendedName>
    <alternativeName>
        <fullName evidence="1">Plastohydroquinone:plastocyanin oxidoreductase iron-sulfur protein</fullName>
        <shortName evidence="1">ISP</shortName>
        <shortName evidence="1">RISP</shortName>
    </alternativeName>
    <alternativeName>
        <fullName evidence="1">Rieske iron-sulfur protein</fullName>
    </alternativeName>
</protein>
<proteinExistence type="inferred from homology"/>
<gene>
    <name evidence="1" type="primary">petC2</name>
    <name type="ordered locus">Ava_3377</name>
</gene>